<gene>
    <name type="primary">RASGEF1C</name>
    <name type="ORF">QtrA-12086</name>
</gene>
<organism>
    <name type="scientific">Macaca fascicularis</name>
    <name type="common">Crab-eating macaque</name>
    <name type="synonym">Cynomolgus monkey</name>
    <dbReference type="NCBI Taxonomy" id="9541"/>
    <lineage>
        <taxon>Eukaryota</taxon>
        <taxon>Metazoa</taxon>
        <taxon>Chordata</taxon>
        <taxon>Craniata</taxon>
        <taxon>Vertebrata</taxon>
        <taxon>Euteleostomi</taxon>
        <taxon>Mammalia</taxon>
        <taxon>Eutheria</taxon>
        <taxon>Euarchontoglires</taxon>
        <taxon>Primates</taxon>
        <taxon>Haplorrhini</taxon>
        <taxon>Catarrhini</taxon>
        <taxon>Cercopithecidae</taxon>
        <taxon>Cercopithecinae</taxon>
        <taxon>Macaca</taxon>
    </lineage>
</organism>
<reference key="1">
    <citation type="submission" date="2001-04" db="EMBL/GenBank/DDBJ databases">
        <title>Isolation of full-length cDNA clones from macaque brain cDNA libraries.</title>
        <authorList>
            <person name="Osada N."/>
            <person name="Hida M."/>
            <person name="Kusuda J."/>
            <person name="Tanuma R."/>
            <person name="Iseki K."/>
            <person name="Hirai M."/>
            <person name="Terao K."/>
            <person name="Suzuki Y."/>
            <person name="Sugano S."/>
            <person name="Hashimoto K."/>
        </authorList>
    </citation>
    <scope>NUCLEOTIDE SEQUENCE [LARGE SCALE MRNA]</scope>
    <source>
        <tissue>Temporal cortex</tissue>
    </source>
</reference>
<dbReference type="EMBL" id="AB060868">
    <property type="protein sequence ID" value="BAB46881.1"/>
    <property type="molecule type" value="mRNA"/>
</dbReference>
<dbReference type="SMR" id="Q95KH6"/>
<dbReference type="STRING" id="9541.ENSMFAP00000012369"/>
<dbReference type="eggNOG" id="KOG3541">
    <property type="taxonomic scope" value="Eukaryota"/>
</dbReference>
<dbReference type="Proteomes" id="UP000233100">
    <property type="component" value="Unplaced"/>
</dbReference>
<dbReference type="GO" id="GO:0005886">
    <property type="term" value="C:plasma membrane"/>
    <property type="evidence" value="ECO:0007669"/>
    <property type="project" value="TreeGrafter"/>
</dbReference>
<dbReference type="GO" id="GO:0005085">
    <property type="term" value="F:guanyl-nucleotide exchange factor activity"/>
    <property type="evidence" value="ECO:0007669"/>
    <property type="project" value="UniProtKB-KW"/>
</dbReference>
<dbReference type="GO" id="GO:0007265">
    <property type="term" value="P:Ras protein signal transduction"/>
    <property type="evidence" value="ECO:0007669"/>
    <property type="project" value="TreeGrafter"/>
</dbReference>
<dbReference type="CDD" id="cd00155">
    <property type="entry name" value="RasGEF"/>
    <property type="match status" value="1"/>
</dbReference>
<dbReference type="CDD" id="cd06224">
    <property type="entry name" value="REM"/>
    <property type="match status" value="1"/>
</dbReference>
<dbReference type="FunFam" id="1.10.840.10:FF:000008">
    <property type="entry name" value="Ras-GEF domain-containing family member 1B"/>
    <property type="match status" value="1"/>
</dbReference>
<dbReference type="Gene3D" id="1.10.840.10">
    <property type="entry name" value="Ras guanine-nucleotide exchange factors catalytic domain"/>
    <property type="match status" value="1"/>
</dbReference>
<dbReference type="Gene3D" id="1.20.870.10">
    <property type="entry name" value="Son of sevenless (SoS) protein Chain: S domain 1"/>
    <property type="match status" value="1"/>
</dbReference>
<dbReference type="InterPro" id="IPR008937">
    <property type="entry name" value="Ras-like_GEF"/>
</dbReference>
<dbReference type="InterPro" id="IPR000651">
    <property type="entry name" value="Ras-like_Gua-exchang_fac_N"/>
</dbReference>
<dbReference type="InterPro" id="IPR019804">
    <property type="entry name" value="Ras_G-nucl-exch_fac_CS"/>
</dbReference>
<dbReference type="InterPro" id="IPR023578">
    <property type="entry name" value="Ras_GEF_dom_sf"/>
</dbReference>
<dbReference type="InterPro" id="IPR001895">
    <property type="entry name" value="RASGEF_cat_dom"/>
</dbReference>
<dbReference type="InterPro" id="IPR036964">
    <property type="entry name" value="RASGEF_cat_dom_sf"/>
</dbReference>
<dbReference type="PANTHER" id="PTHR23113">
    <property type="entry name" value="GUANINE NUCLEOTIDE EXCHANGE FACTOR"/>
    <property type="match status" value="1"/>
</dbReference>
<dbReference type="PANTHER" id="PTHR23113:SF186">
    <property type="entry name" value="RAS-GEF DOMAIN-CONTAINING FAMILY MEMBER 1C"/>
    <property type="match status" value="1"/>
</dbReference>
<dbReference type="Pfam" id="PF00617">
    <property type="entry name" value="RasGEF"/>
    <property type="match status" value="1"/>
</dbReference>
<dbReference type="Pfam" id="PF00618">
    <property type="entry name" value="RasGEF_N"/>
    <property type="match status" value="1"/>
</dbReference>
<dbReference type="SMART" id="SM00147">
    <property type="entry name" value="RasGEF"/>
    <property type="match status" value="1"/>
</dbReference>
<dbReference type="SUPFAM" id="SSF48366">
    <property type="entry name" value="Ras GEF"/>
    <property type="match status" value="1"/>
</dbReference>
<dbReference type="PROSITE" id="PS00720">
    <property type="entry name" value="RASGEF"/>
    <property type="match status" value="1"/>
</dbReference>
<dbReference type="PROSITE" id="PS50009">
    <property type="entry name" value="RASGEF_CAT"/>
    <property type="match status" value="1"/>
</dbReference>
<dbReference type="PROSITE" id="PS50212">
    <property type="entry name" value="RASGEF_NTER"/>
    <property type="match status" value="1"/>
</dbReference>
<proteinExistence type="evidence at transcript level"/>
<keyword id="KW-0344">Guanine-nucleotide releasing factor</keyword>
<keyword id="KW-1185">Reference proteome</keyword>
<name>RGF1C_MACFA</name>
<comment type="function">
    <text evidence="1">Guanine nucleotide exchange factor (GEF).</text>
</comment>
<evidence type="ECO:0000250" key="1"/>
<evidence type="ECO:0000255" key="2">
    <source>
        <dbReference type="PROSITE-ProRule" id="PRU00135"/>
    </source>
</evidence>
<evidence type="ECO:0000255" key="3">
    <source>
        <dbReference type="PROSITE-ProRule" id="PRU00168"/>
    </source>
</evidence>
<evidence type="ECO:0000256" key="4">
    <source>
        <dbReference type="SAM" id="MobiDB-lite"/>
    </source>
</evidence>
<accession>Q95KH6</accession>
<sequence>MPQTLSASDMVTPGSLSPPTTEPTDGEQAGQPLLDGAPSSASLETLIQHLVPTADYYPEKAYIFTFLLSSRLFIEPRELLARVCHLCIEQQQLDKPVLDKARVRKFGPKLLQLLAEWTETFPRDFQEESTIGQLKDVVGRIAPCDETYRKRMHQLLQALHQKLAALRQGPEGLVSADKPISYRTKPPASIHRELLGVCSDPYTLAQQLTHVELERLRHIGPEEFVQAFVNKDPLASTKPCFSDKTSHLEAYVKWFNRLCYLVATEICMPAKKKQRAQVIEFFIDVARECFNIGNFNSLMAIISGMNMSPVSRLKKTWAKVKTAKFFILEHQMDPTGNFCNYRTALRGAAHRSLTAHSSREKIVIPFFSLLIKDIYFLNEGCANRLPNGHVNFEKFLELAKQVGEFITWKQVECPFEQDPSITHYLSTAPIFSEDGLYLASYESESPENQTEKERWKSLRSSILGKT</sequence>
<protein>
    <recommendedName>
        <fullName>Ras-GEF domain-containing family member 1C</fullName>
    </recommendedName>
</protein>
<feature type="chain" id="PRO_0000297644" description="Ras-GEF domain-containing family member 1C">
    <location>
        <begin position="1"/>
        <end position="466"/>
    </location>
</feature>
<feature type="domain" description="N-terminal Ras-GEF" evidence="2">
    <location>
        <begin position="34"/>
        <end position="164"/>
    </location>
</feature>
<feature type="domain" description="Ras-GEF" evidence="3">
    <location>
        <begin position="200"/>
        <end position="446"/>
    </location>
</feature>
<feature type="region of interest" description="Disordered" evidence="4">
    <location>
        <begin position="1"/>
        <end position="35"/>
    </location>
</feature>
<feature type="region of interest" description="Disordered" evidence="4">
    <location>
        <begin position="443"/>
        <end position="466"/>
    </location>
</feature>
<feature type="compositionally biased region" description="Polar residues" evidence="4">
    <location>
        <begin position="1"/>
        <end position="23"/>
    </location>
</feature>